<protein>
    <recommendedName>
        <fullName evidence="1">SsrA-binding protein</fullName>
    </recommendedName>
    <alternativeName>
        <fullName evidence="1">Small protein B</fullName>
    </alternativeName>
</protein>
<keyword id="KW-0963">Cytoplasm</keyword>
<keyword id="KW-0694">RNA-binding</keyword>
<accession>B3PUN0</accession>
<dbReference type="EMBL" id="CP001074">
    <property type="protein sequence ID" value="ACE90429.1"/>
    <property type="molecule type" value="Genomic_DNA"/>
</dbReference>
<dbReference type="SMR" id="B3PUN0"/>
<dbReference type="KEGG" id="rec:RHECIAT_CH0001450"/>
<dbReference type="eggNOG" id="COG0691">
    <property type="taxonomic scope" value="Bacteria"/>
</dbReference>
<dbReference type="HOGENOM" id="CLU_108953_0_1_5"/>
<dbReference type="Proteomes" id="UP000008817">
    <property type="component" value="Chromosome"/>
</dbReference>
<dbReference type="GO" id="GO:0005829">
    <property type="term" value="C:cytosol"/>
    <property type="evidence" value="ECO:0007669"/>
    <property type="project" value="TreeGrafter"/>
</dbReference>
<dbReference type="GO" id="GO:0003723">
    <property type="term" value="F:RNA binding"/>
    <property type="evidence" value="ECO:0007669"/>
    <property type="project" value="UniProtKB-UniRule"/>
</dbReference>
<dbReference type="GO" id="GO:0070929">
    <property type="term" value="P:trans-translation"/>
    <property type="evidence" value="ECO:0007669"/>
    <property type="project" value="UniProtKB-UniRule"/>
</dbReference>
<dbReference type="CDD" id="cd09294">
    <property type="entry name" value="SmpB"/>
    <property type="match status" value="1"/>
</dbReference>
<dbReference type="Gene3D" id="2.40.280.10">
    <property type="match status" value="1"/>
</dbReference>
<dbReference type="HAMAP" id="MF_00023">
    <property type="entry name" value="SmpB"/>
    <property type="match status" value="1"/>
</dbReference>
<dbReference type="InterPro" id="IPR023620">
    <property type="entry name" value="SmpB"/>
</dbReference>
<dbReference type="InterPro" id="IPR000037">
    <property type="entry name" value="SsrA-bd_prot"/>
</dbReference>
<dbReference type="InterPro" id="IPR020081">
    <property type="entry name" value="SsrA-bd_prot_CS"/>
</dbReference>
<dbReference type="NCBIfam" id="NF003843">
    <property type="entry name" value="PRK05422.1"/>
    <property type="match status" value="1"/>
</dbReference>
<dbReference type="NCBIfam" id="TIGR00086">
    <property type="entry name" value="smpB"/>
    <property type="match status" value="1"/>
</dbReference>
<dbReference type="PANTHER" id="PTHR30308:SF2">
    <property type="entry name" value="SSRA-BINDING PROTEIN"/>
    <property type="match status" value="1"/>
</dbReference>
<dbReference type="PANTHER" id="PTHR30308">
    <property type="entry name" value="TMRNA-BINDING COMPONENT OF TRANS-TRANSLATION TAGGING COMPLEX"/>
    <property type="match status" value="1"/>
</dbReference>
<dbReference type="Pfam" id="PF01668">
    <property type="entry name" value="SmpB"/>
    <property type="match status" value="1"/>
</dbReference>
<dbReference type="SUPFAM" id="SSF74982">
    <property type="entry name" value="Small protein B (SmpB)"/>
    <property type="match status" value="1"/>
</dbReference>
<dbReference type="PROSITE" id="PS01317">
    <property type="entry name" value="SSRP"/>
    <property type="match status" value="1"/>
</dbReference>
<name>SSRP_RHIE6</name>
<sequence>MAPKGSQRVVNKVVAENRKARFNYEIIDTYEAGLVLKGTEVKSLREGKANIAESYASDEDGEIWLINSYLPEYLQANRFNHEPRRRRKLLLSGREIHRLRSAVNREGMTLVPLKIYFNDRGRAKMELALAKGKKLHDKRESEKERDWNRQKSRLLKDNG</sequence>
<organism>
    <name type="scientific">Rhizobium etli (strain CIAT 652)</name>
    <dbReference type="NCBI Taxonomy" id="491916"/>
    <lineage>
        <taxon>Bacteria</taxon>
        <taxon>Pseudomonadati</taxon>
        <taxon>Pseudomonadota</taxon>
        <taxon>Alphaproteobacteria</taxon>
        <taxon>Hyphomicrobiales</taxon>
        <taxon>Rhizobiaceae</taxon>
        <taxon>Rhizobium/Agrobacterium group</taxon>
        <taxon>Rhizobium</taxon>
    </lineage>
</organism>
<feature type="chain" id="PRO_1000090176" description="SsrA-binding protein">
    <location>
        <begin position="1"/>
        <end position="159"/>
    </location>
</feature>
<feature type="region of interest" description="Disordered" evidence="2">
    <location>
        <begin position="131"/>
        <end position="159"/>
    </location>
</feature>
<feature type="compositionally biased region" description="Basic and acidic residues" evidence="2">
    <location>
        <begin position="137"/>
        <end position="159"/>
    </location>
</feature>
<gene>
    <name evidence="1" type="primary">smpB</name>
    <name type="ordered locus">RHECIAT_CH0001450</name>
</gene>
<reference key="1">
    <citation type="journal article" date="2010" name="Appl. Environ. Microbiol.">
        <title>Conserved symbiotic plasmid DNA sequences in the multireplicon pangenomic structure of Rhizobium etli.</title>
        <authorList>
            <person name="Gonzalez V."/>
            <person name="Acosta J.L."/>
            <person name="Santamaria R.I."/>
            <person name="Bustos P."/>
            <person name="Fernandez J.L."/>
            <person name="Hernandez Gonzalez I.L."/>
            <person name="Diaz R."/>
            <person name="Flores M."/>
            <person name="Palacios R."/>
            <person name="Mora J."/>
            <person name="Davila G."/>
        </authorList>
    </citation>
    <scope>NUCLEOTIDE SEQUENCE [LARGE SCALE GENOMIC DNA]</scope>
    <source>
        <strain>CIAT 652</strain>
    </source>
</reference>
<evidence type="ECO:0000255" key="1">
    <source>
        <dbReference type="HAMAP-Rule" id="MF_00023"/>
    </source>
</evidence>
<evidence type="ECO:0000256" key="2">
    <source>
        <dbReference type="SAM" id="MobiDB-lite"/>
    </source>
</evidence>
<comment type="function">
    <text evidence="1">Required for rescue of stalled ribosomes mediated by trans-translation. Binds to transfer-messenger RNA (tmRNA), required for stable association of tmRNA with ribosomes. tmRNA and SmpB together mimic tRNA shape, replacing the anticodon stem-loop with SmpB. tmRNA is encoded by the ssrA gene; the 2 termini fold to resemble tRNA(Ala) and it encodes a 'tag peptide', a short internal open reading frame. During trans-translation Ala-aminoacylated tmRNA acts like a tRNA, entering the A-site of stalled ribosomes, displacing the stalled mRNA. The ribosome then switches to translate the ORF on the tmRNA; the nascent peptide is terminated with the 'tag peptide' encoded by the tmRNA and targeted for degradation. The ribosome is freed to recommence translation, which seems to be the essential function of trans-translation.</text>
</comment>
<comment type="subcellular location">
    <subcellularLocation>
        <location evidence="1">Cytoplasm</location>
    </subcellularLocation>
    <text evidence="1">The tmRNA-SmpB complex associates with stalled 70S ribosomes.</text>
</comment>
<comment type="similarity">
    <text evidence="1">Belongs to the SmpB family.</text>
</comment>
<proteinExistence type="inferred from homology"/>